<sequence>MVTITNAHTELIHDAVLDYYGKRLATCSSDKTIQIFEVDGDSHKLVDSLHGHEGPVWQVDWAHPKFGVILASCSYDGKVLIWKEENGRWSQIAAYEVHSASVNSVKWAPHEYGPLLLCSSSDGKFSVVEFKENGTTSPIIIDAHAIGVNAACWAPATIEDDGQQSQHLRRIATGGADNLVKIWKYNPEANTYLLEDTLAAHADWVRDVAWSPSVLPRAYLATVSQDRTCIIWTQENNQGPWTKTLLKEDKFPDVLWRASWSLSGNILALSGGDNKVTLWKENLEGKWESAAEIEQ</sequence>
<name>SEC13_EREGS</name>
<protein>
    <recommendedName>
        <fullName>Protein transport protein SEC13</fullName>
    </recommendedName>
</protein>
<evidence type="ECO:0000250" key="1"/>
<evidence type="ECO:0000250" key="2">
    <source>
        <dbReference type="UniProtKB" id="Q04491"/>
    </source>
</evidence>
<evidence type="ECO:0000305" key="3"/>
<comment type="function">
    <text evidence="2">Component of the coat protein complex II (COPII) which promotes the formation of transport vesicles from the endoplasmic reticulum (ER). The coat has two main functions, the physical deformation of the endoplasmic reticulum membrane into vesicles and the selection of cargo molecules. It also functions as a component of the nuclear pore complex (NPC). NPC components, collectively referred to as nucleoporins (NUPs), can play the role of both NPC structural components and of docking or interaction partners for transiently associated nuclear transport factors. SEC13 is required for efficient mRNA export from the nucleus to the cytoplasm and for correct nuclear pore biogenesis and distribution (By similarity).</text>
</comment>
<comment type="subunit">
    <text evidence="2">The COPII coat is composed of at least 5 proteins: the SEC23/24 complex, the SEC13/31 complex, and the protein SAR1. Component of the nuclear pore complex (NPC). NPC constitutes the exclusive means of nucleocytoplasmic transport. NPCs allow the passive diffusion of ions and small molecules and the active, nuclear transport receptor-mediated bidirectional transport of macromolecules such as proteins, RNAs, ribonucleoparticles (RNPs), and ribosomal subunits across the nuclear envelope. Due to its 8-fold rotational symmetry, all subunits are present with 8 copies or multiples thereof.</text>
</comment>
<comment type="subcellular location">
    <subcellularLocation>
        <location evidence="1">Cytoplasmic vesicle</location>
        <location evidence="1">COPII-coated vesicle membrane</location>
        <topology evidence="1">Peripheral membrane protein</topology>
        <orientation evidence="1">Cytoplasmic side</orientation>
    </subcellularLocation>
    <subcellularLocation>
        <location evidence="1">Endoplasmic reticulum membrane</location>
        <topology evidence="1">Peripheral membrane protein</topology>
        <orientation evidence="1">Cytoplasmic side</orientation>
    </subcellularLocation>
    <subcellularLocation>
        <location evidence="2">Nucleus</location>
        <location evidence="2">Nuclear pore complex</location>
    </subcellularLocation>
</comment>
<comment type="similarity">
    <text evidence="3">Belongs to the WD repeat SEC13 family.</text>
</comment>
<proteinExistence type="inferred from homology"/>
<gene>
    <name type="primary">SEC13</name>
    <name type="ordered locus">ACR199C</name>
</gene>
<keyword id="KW-0968">Cytoplasmic vesicle</keyword>
<keyword id="KW-0256">Endoplasmic reticulum</keyword>
<keyword id="KW-0931">ER-Golgi transport</keyword>
<keyword id="KW-0472">Membrane</keyword>
<keyword id="KW-0509">mRNA transport</keyword>
<keyword id="KW-0906">Nuclear pore complex</keyword>
<keyword id="KW-0539">Nucleus</keyword>
<keyword id="KW-0653">Protein transport</keyword>
<keyword id="KW-1185">Reference proteome</keyword>
<keyword id="KW-0677">Repeat</keyword>
<keyword id="KW-0811">Translocation</keyword>
<keyword id="KW-0813">Transport</keyword>
<keyword id="KW-0853">WD repeat</keyword>
<dbReference type="EMBL" id="AE016816">
    <property type="protein sequence ID" value="AAS51425.1"/>
    <property type="molecule type" value="Genomic_DNA"/>
</dbReference>
<dbReference type="RefSeq" id="NP_983601.1">
    <property type="nucleotide sequence ID" value="NM_208954.1"/>
</dbReference>
<dbReference type="SMR" id="Q75BS2"/>
<dbReference type="FunCoup" id="Q75BS2">
    <property type="interactions" value="1147"/>
</dbReference>
<dbReference type="STRING" id="284811.Q75BS2"/>
<dbReference type="EnsemblFungi" id="AAS51425">
    <property type="protein sequence ID" value="AAS51425"/>
    <property type="gene ID" value="AGOS_ACR199C"/>
</dbReference>
<dbReference type="GeneID" id="4619733"/>
<dbReference type="KEGG" id="ago:AGOS_ACR199C"/>
<dbReference type="eggNOG" id="KOG1332">
    <property type="taxonomic scope" value="Eukaryota"/>
</dbReference>
<dbReference type="HOGENOM" id="CLU_032441_0_1_1"/>
<dbReference type="InParanoid" id="Q75BS2"/>
<dbReference type="OMA" id="IWKEEGD"/>
<dbReference type="OrthoDB" id="364224at2759"/>
<dbReference type="Proteomes" id="UP000000591">
    <property type="component" value="Chromosome III"/>
</dbReference>
<dbReference type="GO" id="GO:0030127">
    <property type="term" value="C:COPII vesicle coat"/>
    <property type="evidence" value="ECO:0000318"/>
    <property type="project" value="GO_Central"/>
</dbReference>
<dbReference type="GO" id="GO:0005789">
    <property type="term" value="C:endoplasmic reticulum membrane"/>
    <property type="evidence" value="ECO:0007669"/>
    <property type="project" value="UniProtKB-SubCell"/>
</dbReference>
<dbReference type="GO" id="GO:0061700">
    <property type="term" value="C:GATOR2 complex"/>
    <property type="evidence" value="ECO:0007669"/>
    <property type="project" value="EnsemblFungi"/>
</dbReference>
<dbReference type="GO" id="GO:0031080">
    <property type="term" value="C:nuclear pore outer ring"/>
    <property type="evidence" value="ECO:0000318"/>
    <property type="project" value="GO_Central"/>
</dbReference>
<dbReference type="GO" id="GO:0005198">
    <property type="term" value="F:structural molecule activity"/>
    <property type="evidence" value="ECO:0000318"/>
    <property type="project" value="GO_Central"/>
</dbReference>
<dbReference type="GO" id="GO:0090114">
    <property type="term" value="P:COPII-coated vesicle budding"/>
    <property type="evidence" value="ECO:0000318"/>
    <property type="project" value="GO_Central"/>
</dbReference>
<dbReference type="GO" id="GO:0036503">
    <property type="term" value="P:ERAD pathway"/>
    <property type="evidence" value="ECO:0007669"/>
    <property type="project" value="EnsemblFungi"/>
</dbReference>
<dbReference type="GO" id="GO:0051028">
    <property type="term" value="P:mRNA transport"/>
    <property type="evidence" value="ECO:0007669"/>
    <property type="project" value="UniProtKB-KW"/>
</dbReference>
<dbReference type="GO" id="GO:0051664">
    <property type="term" value="P:nuclear pore localization"/>
    <property type="evidence" value="ECO:0007669"/>
    <property type="project" value="EnsemblFungi"/>
</dbReference>
<dbReference type="GO" id="GO:0045893">
    <property type="term" value="P:positive regulation of DNA-templated transcription"/>
    <property type="evidence" value="ECO:0007669"/>
    <property type="project" value="EnsemblFungi"/>
</dbReference>
<dbReference type="GO" id="GO:1902953">
    <property type="term" value="P:positive regulation of ER to Golgi vesicle-mediated transport"/>
    <property type="evidence" value="ECO:0007669"/>
    <property type="project" value="EnsemblFungi"/>
</dbReference>
<dbReference type="GO" id="GO:0070863">
    <property type="term" value="P:positive regulation of protein exit from endoplasmic reticulum"/>
    <property type="evidence" value="ECO:0007669"/>
    <property type="project" value="EnsemblFungi"/>
</dbReference>
<dbReference type="GO" id="GO:0032008">
    <property type="term" value="P:positive regulation of TOR signaling"/>
    <property type="evidence" value="ECO:0000318"/>
    <property type="project" value="GO_Central"/>
</dbReference>
<dbReference type="GO" id="GO:1904263">
    <property type="term" value="P:positive regulation of TORC1 signaling"/>
    <property type="evidence" value="ECO:0007669"/>
    <property type="project" value="EnsemblFungi"/>
</dbReference>
<dbReference type="GO" id="GO:0032527">
    <property type="term" value="P:protein exit from endoplasmic reticulum"/>
    <property type="evidence" value="ECO:0000318"/>
    <property type="project" value="GO_Central"/>
</dbReference>
<dbReference type="GO" id="GO:0006606">
    <property type="term" value="P:protein import into nucleus"/>
    <property type="evidence" value="ECO:0000318"/>
    <property type="project" value="GO_Central"/>
</dbReference>
<dbReference type="FunFam" id="2.130.10.10:FF:000017">
    <property type="entry name" value="SEC13 homolog (S. cerevisiae)"/>
    <property type="match status" value="1"/>
</dbReference>
<dbReference type="Gene3D" id="2.130.10.10">
    <property type="entry name" value="YVTN repeat-like/Quinoprotein amine dehydrogenase"/>
    <property type="match status" value="1"/>
</dbReference>
<dbReference type="InterPro" id="IPR037363">
    <property type="entry name" value="Sec13/Seh1_fam"/>
</dbReference>
<dbReference type="InterPro" id="IPR015943">
    <property type="entry name" value="WD40/YVTN_repeat-like_dom_sf"/>
</dbReference>
<dbReference type="InterPro" id="IPR036322">
    <property type="entry name" value="WD40_repeat_dom_sf"/>
</dbReference>
<dbReference type="InterPro" id="IPR001680">
    <property type="entry name" value="WD40_rpt"/>
</dbReference>
<dbReference type="PANTHER" id="PTHR11024">
    <property type="entry name" value="NUCLEAR PORE COMPLEX PROTEIN SEC13 / SEH1 FAMILY MEMBER"/>
    <property type="match status" value="1"/>
</dbReference>
<dbReference type="PANTHER" id="PTHR11024:SF2">
    <property type="entry name" value="PROTEIN SEC13 HOMOLOG"/>
    <property type="match status" value="1"/>
</dbReference>
<dbReference type="Pfam" id="PF00400">
    <property type="entry name" value="WD40"/>
    <property type="match status" value="5"/>
</dbReference>
<dbReference type="SMART" id="SM00320">
    <property type="entry name" value="WD40"/>
    <property type="match status" value="6"/>
</dbReference>
<dbReference type="SUPFAM" id="SSF50978">
    <property type="entry name" value="WD40 repeat-like"/>
    <property type="match status" value="1"/>
</dbReference>
<dbReference type="PROSITE" id="PS50082">
    <property type="entry name" value="WD_REPEATS_2"/>
    <property type="match status" value="2"/>
</dbReference>
<dbReference type="PROSITE" id="PS50294">
    <property type="entry name" value="WD_REPEATS_REGION"/>
    <property type="match status" value="1"/>
</dbReference>
<feature type="chain" id="PRO_0000295402" description="Protein transport protein SEC13">
    <location>
        <begin position="1"/>
        <end position="295"/>
    </location>
</feature>
<feature type="repeat" description="WD 1">
    <location>
        <begin position="7"/>
        <end position="46"/>
    </location>
</feature>
<feature type="repeat" description="WD 2">
    <location>
        <begin position="51"/>
        <end position="92"/>
    </location>
</feature>
<feature type="repeat" description="WD 3">
    <location>
        <begin position="97"/>
        <end position="140"/>
    </location>
</feature>
<feature type="repeat" description="WD 4">
    <location>
        <begin position="143"/>
        <end position="193"/>
    </location>
</feature>
<feature type="repeat" description="WD 5">
    <location>
        <begin position="200"/>
        <end position="242"/>
    </location>
</feature>
<feature type="repeat" description="WD 6">
    <location>
        <begin position="250"/>
        <end position="289"/>
    </location>
</feature>
<organism>
    <name type="scientific">Eremothecium gossypii (strain ATCC 10895 / CBS 109.51 / FGSC 9923 / NRRL Y-1056)</name>
    <name type="common">Yeast</name>
    <name type="synonym">Ashbya gossypii</name>
    <dbReference type="NCBI Taxonomy" id="284811"/>
    <lineage>
        <taxon>Eukaryota</taxon>
        <taxon>Fungi</taxon>
        <taxon>Dikarya</taxon>
        <taxon>Ascomycota</taxon>
        <taxon>Saccharomycotina</taxon>
        <taxon>Saccharomycetes</taxon>
        <taxon>Saccharomycetales</taxon>
        <taxon>Saccharomycetaceae</taxon>
        <taxon>Eremothecium</taxon>
    </lineage>
</organism>
<reference key="1">
    <citation type="journal article" date="2004" name="Science">
        <title>The Ashbya gossypii genome as a tool for mapping the ancient Saccharomyces cerevisiae genome.</title>
        <authorList>
            <person name="Dietrich F.S."/>
            <person name="Voegeli S."/>
            <person name="Brachat S."/>
            <person name="Lerch A."/>
            <person name="Gates K."/>
            <person name="Steiner S."/>
            <person name="Mohr C."/>
            <person name="Poehlmann R."/>
            <person name="Luedi P."/>
            <person name="Choi S."/>
            <person name="Wing R.A."/>
            <person name="Flavier A."/>
            <person name="Gaffney T.D."/>
            <person name="Philippsen P."/>
        </authorList>
    </citation>
    <scope>NUCLEOTIDE SEQUENCE [LARGE SCALE GENOMIC DNA]</scope>
    <source>
        <strain>ATCC 10895 / CBS 109.51 / FGSC 9923 / NRRL Y-1056</strain>
    </source>
</reference>
<reference key="2">
    <citation type="journal article" date="2013" name="G3 (Bethesda)">
        <title>Genomes of Ashbya fungi isolated from insects reveal four mating-type loci, numerous translocations, lack of transposons, and distinct gene duplications.</title>
        <authorList>
            <person name="Dietrich F.S."/>
            <person name="Voegeli S."/>
            <person name="Kuo S."/>
            <person name="Philippsen P."/>
        </authorList>
    </citation>
    <scope>GENOME REANNOTATION</scope>
    <source>
        <strain>ATCC 10895 / CBS 109.51 / FGSC 9923 / NRRL Y-1056</strain>
    </source>
</reference>
<accession>Q75BS2</accession>